<feature type="transit peptide" description="Mitochondrion" evidence="2">
    <location>
        <begin position="1"/>
        <end position="8"/>
    </location>
</feature>
<feature type="chain" id="PRO_0000277588" description="Iron-sulfur cluster assembly 2 homolog, mitochondrial">
    <location>
        <begin position="9"/>
        <end position="154"/>
    </location>
</feature>
<feature type="region of interest" description="Disordered" evidence="3">
    <location>
        <begin position="29"/>
        <end position="49"/>
    </location>
</feature>
<feature type="compositionally biased region" description="Low complexity" evidence="3">
    <location>
        <begin position="39"/>
        <end position="49"/>
    </location>
</feature>
<feature type="binding site" evidence="1">
    <location>
        <position position="79"/>
    </location>
    <ligand>
        <name>Fe cation</name>
        <dbReference type="ChEBI" id="CHEBI:24875"/>
    </ligand>
</feature>
<feature type="binding site" evidence="1">
    <location>
        <position position="144"/>
    </location>
    <ligand>
        <name>Fe cation</name>
        <dbReference type="ChEBI" id="CHEBI:24875"/>
    </ligand>
</feature>
<feature type="binding site" evidence="1">
    <location>
        <position position="146"/>
    </location>
    <ligand>
        <name>Fe cation</name>
        <dbReference type="ChEBI" id="CHEBI:24875"/>
    </ligand>
</feature>
<feature type="splice variant" id="VSP_055691" description="In isoform 2." evidence="8">
    <original>RL</original>
    <variation>GI</variation>
    <location>
        <begin position="59"/>
        <end position="60"/>
    </location>
</feature>
<feature type="splice variant" id="VSP_055692" description="In isoform 2." evidence="8">
    <location>
        <begin position="61"/>
        <end position="154"/>
    </location>
</feature>
<feature type="sequence variant" id="VAR_073794" description="In MMDS4; dbSNP:rs730882246." evidence="5">
    <original>G</original>
    <variation>S</variation>
    <location>
        <position position="77"/>
    </location>
</feature>
<feature type="mutagenesis site" description="Abolishes the formation of the [2Fe-2S] ISCA2-IBA57 complex formation." evidence="6">
    <original>C</original>
    <variation>A</variation>
    <location>
        <position position="79"/>
    </location>
</feature>
<feature type="mutagenesis site" description="Abolishes the formation of the [2Fe-2S] ISCA2-IBA57 complex formation." evidence="6">
    <original>C</original>
    <variation>A</variation>
    <location>
        <position position="144"/>
    </location>
</feature>
<feature type="mutagenesis site" description="Abolishes the formation of the [2Fe-2S] ISCA2-IBA57 complex formation." evidence="6">
    <original>C</original>
    <variation>A</variation>
    <location>
        <position position="146"/>
    </location>
</feature>
<feature type="sequence conflict" description="In Ref. 5; AAH32893." evidence="8" ref="5">
    <original>R</original>
    <variation>C</variation>
    <location>
        <position position="51"/>
    </location>
</feature>
<feature type="sequence conflict" description="In Ref. 5; AAH15771." evidence="8" ref="5">
    <original>V</original>
    <variation>F</variation>
    <location>
        <position position="108"/>
    </location>
</feature>
<gene>
    <name type="primary">ISCA2</name>
    <name type="synonym">HBLD1</name>
</gene>
<reference key="1">
    <citation type="submission" date="2003-02" db="EMBL/GenBank/DDBJ databases">
        <title>Full-length cDNA libraries and normalization.</title>
        <authorList>
            <person name="Li W.B."/>
            <person name="Gruber C."/>
            <person name="Jessee J."/>
            <person name="Polayes D."/>
        </authorList>
    </citation>
    <scope>NUCLEOTIDE SEQUENCE [LARGE SCALE MRNA]</scope>
    <source>
        <tissue>Fetal brain</tissue>
    </source>
</reference>
<reference key="2">
    <citation type="journal article" date="2004" name="Nat. Genet.">
        <title>Complete sequencing and characterization of 21,243 full-length human cDNAs.</title>
        <authorList>
            <person name="Ota T."/>
            <person name="Suzuki Y."/>
            <person name="Nishikawa T."/>
            <person name="Otsuki T."/>
            <person name="Sugiyama T."/>
            <person name="Irie R."/>
            <person name="Wakamatsu A."/>
            <person name="Hayashi K."/>
            <person name="Sato H."/>
            <person name="Nagai K."/>
            <person name="Kimura K."/>
            <person name="Makita H."/>
            <person name="Sekine M."/>
            <person name="Obayashi M."/>
            <person name="Nishi T."/>
            <person name="Shibahara T."/>
            <person name="Tanaka T."/>
            <person name="Ishii S."/>
            <person name="Yamamoto J."/>
            <person name="Saito K."/>
            <person name="Kawai Y."/>
            <person name="Isono Y."/>
            <person name="Nakamura Y."/>
            <person name="Nagahari K."/>
            <person name="Murakami K."/>
            <person name="Yasuda T."/>
            <person name="Iwayanagi T."/>
            <person name="Wagatsuma M."/>
            <person name="Shiratori A."/>
            <person name="Sudo H."/>
            <person name="Hosoiri T."/>
            <person name="Kaku Y."/>
            <person name="Kodaira H."/>
            <person name="Kondo H."/>
            <person name="Sugawara M."/>
            <person name="Takahashi M."/>
            <person name="Kanda K."/>
            <person name="Yokoi T."/>
            <person name="Furuya T."/>
            <person name="Kikkawa E."/>
            <person name="Omura Y."/>
            <person name="Abe K."/>
            <person name="Kamihara K."/>
            <person name="Katsuta N."/>
            <person name="Sato K."/>
            <person name="Tanikawa M."/>
            <person name="Yamazaki M."/>
            <person name="Ninomiya K."/>
            <person name="Ishibashi T."/>
            <person name="Yamashita H."/>
            <person name="Murakawa K."/>
            <person name="Fujimori K."/>
            <person name="Tanai H."/>
            <person name="Kimata M."/>
            <person name="Watanabe M."/>
            <person name="Hiraoka S."/>
            <person name="Chiba Y."/>
            <person name="Ishida S."/>
            <person name="Ono Y."/>
            <person name="Takiguchi S."/>
            <person name="Watanabe S."/>
            <person name="Yosida M."/>
            <person name="Hotuta T."/>
            <person name="Kusano J."/>
            <person name="Kanehori K."/>
            <person name="Takahashi-Fujii A."/>
            <person name="Hara H."/>
            <person name="Tanase T.-O."/>
            <person name="Nomura Y."/>
            <person name="Togiya S."/>
            <person name="Komai F."/>
            <person name="Hara R."/>
            <person name="Takeuchi K."/>
            <person name="Arita M."/>
            <person name="Imose N."/>
            <person name="Musashino K."/>
            <person name="Yuuki H."/>
            <person name="Oshima A."/>
            <person name="Sasaki N."/>
            <person name="Aotsuka S."/>
            <person name="Yoshikawa Y."/>
            <person name="Matsunawa H."/>
            <person name="Ichihara T."/>
            <person name="Shiohata N."/>
            <person name="Sano S."/>
            <person name="Moriya S."/>
            <person name="Momiyama H."/>
            <person name="Satoh N."/>
            <person name="Takami S."/>
            <person name="Terashima Y."/>
            <person name="Suzuki O."/>
            <person name="Nakagawa S."/>
            <person name="Senoh A."/>
            <person name="Mizoguchi H."/>
            <person name="Goto Y."/>
            <person name="Shimizu F."/>
            <person name="Wakebe H."/>
            <person name="Hishigaki H."/>
            <person name="Watanabe T."/>
            <person name="Sugiyama A."/>
            <person name="Takemoto M."/>
            <person name="Kawakami B."/>
            <person name="Yamazaki M."/>
            <person name="Watanabe K."/>
            <person name="Kumagai A."/>
            <person name="Itakura S."/>
            <person name="Fukuzumi Y."/>
            <person name="Fujimori Y."/>
            <person name="Komiyama M."/>
            <person name="Tashiro H."/>
            <person name="Tanigami A."/>
            <person name="Fujiwara T."/>
            <person name="Ono T."/>
            <person name="Yamada K."/>
            <person name="Fujii Y."/>
            <person name="Ozaki K."/>
            <person name="Hirao M."/>
            <person name="Ohmori Y."/>
            <person name="Kawabata A."/>
            <person name="Hikiji T."/>
            <person name="Kobatake N."/>
            <person name="Inagaki H."/>
            <person name="Ikema Y."/>
            <person name="Okamoto S."/>
            <person name="Okitani R."/>
            <person name="Kawakami T."/>
            <person name="Noguchi S."/>
            <person name="Itoh T."/>
            <person name="Shigeta K."/>
            <person name="Senba T."/>
            <person name="Matsumura K."/>
            <person name="Nakajima Y."/>
            <person name="Mizuno T."/>
            <person name="Morinaga M."/>
            <person name="Sasaki M."/>
            <person name="Togashi T."/>
            <person name="Oyama M."/>
            <person name="Hata H."/>
            <person name="Watanabe M."/>
            <person name="Komatsu T."/>
            <person name="Mizushima-Sugano J."/>
            <person name="Satoh T."/>
            <person name="Shirai Y."/>
            <person name="Takahashi Y."/>
            <person name="Nakagawa K."/>
            <person name="Okumura K."/>
            <person name="Nagase T."/>
            <person name="Nomura N."/>
            <person name="Kikuchi H."/>
            <person name="Masuho Y."/>
            <person name="Yamashita R."/>
            <person name="Nakai K."/>
            <person name="Yada T."/>
            <person name="Nakamura Y."/>
            <person name="Ohara O."/>
            <person name="Isogai T."/>
            <person name="Sugano S."/>
        </authorList>
    </citation>
    <scope>NUCLEOTIDE SEQUENCE [LARGE SCALE MRNA]</scope>
</reference>
<reference key="3">
    <citation type="journal article" date="2003" name="Nature">
        <title>The DNA sequence and analysis of human chromosome 14.</title>
        <authorList>
            <person name="Heilig R."/>
            <person name="Eckenberg R."/>
            <person name="Petit J.-L."/>
            <person name="Fonknechten N."/>
            <person name="Da Silva C."/>
            <person name="Cattolico L."/>
            <person name="Levy M."/>
            <person name="Barbe V."/>
            <person name="De Berardinis V."/>
            <person name="Ureta-Vidal A."/>
            <person name="Pelletier E."/>
            <person name="Vico V."/>
            <person name="Anthouard V."/>
            <person name="Rowen L."/>
            <person name="Madan A."/>
            <person name="Qin S."/>
            <person name="Sun H."/>
            <person name="Du H."/>
            <person name="Pepin K."/>
            <person name="Artiguenave F."/>
            <person name="Robert C."/>
            <person name="Cruaud C."/>
            <person name="Bruels T."/>
            <person name="Jaillon O."/>
            <person name="Friedlander L."/>
            <person name="Samson G."/>
            <person name="Brottier P."/>
            <person name="Cure S."/>
            <person name="Segurens B."/>
            <person name="Aniere F."/>
            <person name="Samain S."/>
            <person name="Crespeau H."/>
            <person name="Abbasi N."/>
            <person name="Aiach N."/>
            <person name="Boscus D."/>
            <person name="Dickhoff R."/>
            <person name="Dors M."/>
            <person name="Dubois I."/>
            <person name="Friedman C."/>
            <person name="Gouyvenoux M."/>
            <person name="James R."/>
            <person name="Madan A."/>
            <person name="Mairey-Estrada B."/>
            <person name="Mangenot S."/>
            <person name="Martins N."/>
            <person name="Menard M."/>
            <person name="Oztas S."/>
            <person name="Ratcliffe A."/>
            <person name="Shaffer T."/>
            <person name="Trask B."/>
            <person name="Vacherie B."/>
            <person name="Bellemere C."/>
            <person name="Belser C."/>
            <person name="Besnard-Gonnet M."/>
            <person name="Bartol-Mavel D."/>
            <person name="Boutard M."/>
            <person name="Briez-Silla S."/>
            <person name="Combette S."/>
            <person name="Dufosse-Laurent V."/>
            <person name="Ferron C."/>
            <person name="Lechaplais C."/>
            <person name="Louesse C."/>
            <person name="Muselet D."/>
            <person name="Magdelenat G."/>
            <person name="Pateau E."/>
            <person name="Petit E."/>
            <person name="Sirvain-Trukniewicz P."/>
            <person name="Trybou A."/>
            <person name="Vega-Czarny N."/>
            <person name="Bataille E."/>
            <person name="Bluet E."/>
            <person name="Bordelais I."/>
            <person name="Dubois M."/>
            <person name="Dumont C."/>
            <person name="Guerin T."/>
            <person name="Haffray S."/>
            <person name="Hammadi R."/>
            <person name="Muanga J."/>
            <person name="Pellouin V."/>
            <person name="Robert D."/>
            <person name="Wunderle E."/>
            <person name="Gauguet G."/>
            <person name="Roy A."/>
            <person name="Sainte-Marthe L."/>
            <person name="Verdier J."/>
            <person name="Verdier-Discala C."/>
            <person name="Hillier L.W."/>
            <person name="Fulton L."/>
            <person name="McPherson J."/>
            <person name="Matsuda F."/>
            <person name="Wilson R."/>
            <person name="Scarpelli C."/>
            <person name="Gyapay G."/>
            <person name="Wincker P."/>
            <person name="Saurin W."/>
            <person name="Quetier F."/>
            <person name="Waterston R."/>
            <person name="Hood L."/>
            <person name="Weissenbach J."/>
        </authorList>
    </citation>
    <scope>NUCLEOTIDE SEQUENCE [LARGE SCALE GENOMIC DNA]</scope>
</reference>
<reference key="4">
    <citation type="submission" date="2005-07" db="EMBL/GenBank/DDBJ databases">
        <authorList>
            <person name="Mural R.J."/>
            <person name="Istrail S."/>
            <person name="Sutton G.G."/>
            <person name="Florea L."/>
            <person name="Halpern A.L."/>
            <person name="Mobarry C.M."/>
            <person name="Lippert R."/>
            <person name="Walenz B."/>
            <person name="Shatkay H."/>
            <person name="Dew I."/>
            <person name="Miller J.R."/>
            <person name="Flanigan M.J."/>
            <person name="Edwards N.J."/>
            <person name="Bolanos R."/>
            <person name="Fasulo D."/>
            <person name="Halldorsson B.V."/>
            <person name="Hannenhalli S."/>
            <person name="Turner R."/>
            <person name="Yooseph S."/>
            <person name="Lu F."/>
            <person name="Nusskern D.R."/>
            <person name="Shue B.C."/>
            <person name="Zheng X.H."/>
            <person name="Zhong F."/>
            <person name="Delcher A.L."/>
            <person name="Huson D.H."/>
            <person name="Kravitz S.A."/>
            <person name="Mouchard L."/>
            <person name="Reinert K."/>
            <person name="Remington K.A."/>
            <person name="Clark A.G."/>
            <person name="Waterman M.S."/>
            <person name="Eichler E.E."/>
            <person name="Adams M.D."/>
            <person name="Hunkapiller M.W."/>
            <person name="Myers E.W."/>
            <person name="Venter J.C."/>
        </authorList>
    </citation>
    <scope>NUCLEOTIDE SEQUENCE [LARGE SCALE GENOMIC DNA]</scope>
</reference>
<reference key="5">
    <citation type="journal article" date="2004" name="Genome Res.">
        <title>The status, quality, and expansion of the NIH full-length cDNA project: the Mammalian Gene Collection (MGC).</title>
        <authorList>
            <consortium name="The MGC Project Team"/>
        </authorList>
    </citation>
    <scope>NUCLEOTIDE SEQUENCE [LARGE SCALE MRNA]</scope>
    <source>
        <tissue>Blood</tissue>
        <tissue>Brain</tissue>
    </source>
</reference>
<reference key="6">
    <citation type="journal article" date="2011" name="BMC Syst. Biol.">
        <title>Initial characterization of the human central proteome.</title>
        <authorList>
            <person name="Burkard T.R."/>
            <person name="Planyavsky M."/>
            <person name="Kaupe I."/>
            <person name="Breitwieser F.P."/>
            <person name="Buerckstuemmer T."/>
            <person name="Bennett K.L."/>
            <person name="Superti-Furga G."/>
            <person name="Colinge J."/>
        </authorList>
    </citation>
    <scope>IDENTIFICATION BY MASS SPECTROMETRY [LARGE SCALE ANALYSIS]</scope>
</reference>
<reference key="7">
    <citation type="journal article" date="2012" name="Mol. Biol. Cell">
        <title>The human mitochondrial ISCA1, ISCA2, and IBA57 proteins are required for [4Fe-4S] protein maturation.</title>
        <authorList>
            <person name="Sheftel A.D."/>
            <person name="Wilbrecht C."/>
            <person name="Stehling O."/>
            <person name="Niggemeyer B."/>
            <person name="Elsasser H.P."/>
            <person name="Muhlenhoff U."/>
            <person name="Lill R."/>
        </authorList>
    </citation>
    <scope>FUNCTION</scope>
    <scope>SUBCELLULAR LOCATION</scope>
</reference>
<reference key="8">
    <citation type="journal article" date="2013" name="J. Proteome Res.">
        <title>Toward a comprehensive characterization of a human cancer cell phosphoproteome.</title>
        <authorList>
            <person name="Zhou H."/>
            <person name="Di Palma S."/>
            <person name="Preisinger C."/>
            <person name="Peng M."/>
            <person name="Polat A.N."/>
            <person name="Heck A.J."/>
            <person name="Mohammed S."/>
        </authorList>
    </citation>
    <scope>IDENTIFICATION BY MASS SPECTROMETRY [LARGE SCALE ANALYSIS]</scope>
    <source>
        <tissue>Erythroleukemia</tissue>
    </source>
</reference>
<reference key="9">
    <citation type="journal article" date="2014" name="J. Proteomics">
        <title>An enzyme assisted RP-RPLC approach for in-depth analysis of human liver phosphoproteome.</title>
        <authorList>
            <person name="Bian Y."/>
            <person name="Song C."/>
            <person name="Cheng K."/>
            <person name="Dong M."/>
            <person name="Wang F."/>
            <person name="Huang J."/>
            <person name="Sun D."/>
            <person name="Wang L."/>
            <person name="Ye M."/>
            <person name="Zou H."/>
        </authorList>
    </citation>
    <scope>IDENTIFICATION BY MASS SPECTROMETRY [LARGE SCALE ANALYSIS]</scope>
    <source>
        <tissue>Liver</tissue>
    </source>
</reference>
<reference key="10">
    <citation type="journal article" date="2015" name="J. Med. Genet.">
        <title>ISCA2 mutation causes infantile neurodegenerative mitochondrial disorder.</title>
        <authorList>
            <person name="Al-Hassnan Z.N."/>
            <person name="Al-Dosary M."/>
            <person name="Alfadhel M."/>
            <person name="Faqeih E.A."/>
            <person name="Alsagob M."/>
            <person name="Kenana R."/>
            <person name="Almass R."/>
            <person name="Al-Harazi O.S."/>
            <person name="Al-Hindi H."/>
            <person name="Malibari O.I."/>
            <person name="Almutari F.B."/>
            <person name="Tulbah S."/>
            <person name="Alhadeq F."/>
            <person name="Al-Sheddi T."/>
            <person name="Alamro R."/>
            <person name="AlAsmari A."/>
            <person name="Almuntashri M."/>
            <person name="Alshaalan H."/>
            <person name="Al-Mohanna F.A."/>
            <person name="Colak D."/>
            <person name="Kaya N."/>
        </authorList>
    </citation>
    <scope>INVOLVEMENT IN MMDS4</scope>
    <scope>VARIANT MMDS4 SER-77</scope>
</reference>
<reference key="11">
    <citation type="journal article" date="2015" name="Proteomics">
        <title>N-terminome analysis of the human mitochondrial proteome.</title>
        <authorList>
            <person name="Vaca Jacome A.S."/>
            <person name="Rabilloud T."/>
            <person name="Schaeffer-Reiss C."/>
            <person name="Rompais M."/>
            <person name="Ayoub D."/>
            <person name="Lane L."/>
            <person name="Bairoch A."/>
            <person name="Van Dorsselaer A."/>
            <person name="Carapito C."/>
        </authorList>
    </citation>
    <scope>IDENTIFICATION BY MASS SPECTROMETRY [LARGE SCALE ANALYSIS]</scope>
</reference>
<reference key="12">
    <citation type="journal article" date="2018" name="J. Am. Chem. Soc.">
        <title>IBA57 Recruits ISCA2 to Form a [2Fe-2S] Cluster-Mediated Complex.</title>
        <authorList>
            <person name="Gourdoupis S."/>
            <person name="Nasta V."/>
            <person name="Calderone V."/>
            <person name="Ciofi-Baffoni S."/>
            <person name="Banci L."/>
        </authorList>
    </citation>
    <scope>INTERACTION WITH IBA57</scope>
    <scope>MUTAGENESIS OF CYS-79; CYS-144 AND CYS-146</scope>
</reference>
<reference key="13">
    <citation type="journal article" date="2019" name="Sci. Rep.">
        <title>Structural properties of [2Fe-2S] ISCA2-IBA57: a complex of the mitochondrial iron-sulfur cluster assembly machinery.</title>
        <authorList>
            <person name="Nasta V."/>
            <person name="Da Vela S."/>
            <person name="Gourdoupis S."/>
            <person name="Ciofi-Baffoni S."/>
            <person name="Svergun D.I."/>
            <person name="Banci L."/>
        </authorList>
    </citation>
    <scope>SUBUNIT</scope>
    <scope>INTERACTION WITH ISCA2</scope>
    <scope>MUTAGENESIS OF ARG-146</scope>
</reference>
<comment type="function">
    <text evidence="4">Involved in the maturation of mitochondrial 4Fe-4S proteins functioning late in the iron-sulfur cluster assembly pathway. May be involved in the binding of an intermediate of Fe/S cluster assembly.</text>
</comment>
<comment type="subunit">
    <text evidence="6 7">Heterotetramer; forms a dimer of dimers with IBA57 (PubMed:31831856). Interacts with [2Fe-2S]-ISCA2 forming the heterodimer [2Fe- 2S]-ISCA2-IBA57 complex; [2Fe-2S] cluster binding is absolutely required to promote the complex formation (PubMed:30269484).</text>
</comment>
<comment type="interaction">
    <interactant intactId="EBI-10258659">
        <id>Q86U28</id>
    </interactant>
    <interactant intactId="EBI-11954519">
        <id>Q49AR9</id>
        <label>ANKS1A</label>
    </interactant>
    <organismsDiffer>false</organismsDiffer>
    <experiments>3</experiments>
</comment>
<comment type="interaction">
    <interactant intactId="EBI-10258659">
        <id>Q86U28</id>
    </interactant>
    <interactant intactId="EBI-25837549">
        <id>P28329-3</id>
        <label>CHAT</label>
    </interactant>
    <organismsDiffer>false</organismsDiffer>
    <experiments>3</experiments>
</comment>
<comment type="interaction">
    <interactant intactId="EBI-10258659">
        <id>Q86U28</id>
    </interactant>
    <interactant intactId="EBI-10976677">
        <id>G5E9A7</id>
        <label>DMWD</label>
    </interactant>
    <organismsDiffer>false</organismsDiffer>
    <experiments>3</experiments>
</comment>
<comment type="interaction">
    <interactant intactId="EBI-10258659">
        <id>Q86U28</id>
    </interactant>
    <interactant intactId="EBI-347740">
        <id>P60228</id>
        <label>EIF3E</label>
    </interactant>
    <organismsDiffer>false</organismsDiffer>
    <experiments>3</experiments>
</comment>
<comment type="interaction">
    <interactant intactId="EBI-10258659">
        <id>Q86U28</id>
    </interactant>
    <interactant intactId="EBI-11986315">
        <id>Q9H5Z6-2</id>
        <label>FAM124B</label>
    </interactant>
    <organismsDiffer>false</organismsDiffer>
    <experiments>3</experiments>
</comment>
<comment type="interaction">
    <interactant intactId="EBI-10258659">
        <id>Q86U28</id>
    </interactant>
    <interactant intactId="EBI-348399">
        <id>P22607</id>
        <label>FGFR3</label>
    </interactant>
    <organismsDiffer>false</organismsDiffer>
    <experiments>3</experiments>
</comment>
<comment type="interaction">
    <interactant intactId="EBI-10258659">
        <id>Q86U28</id>
    </interactant>
    <interactant intactId="EBI-744104">
        <id>P55040</id>
        <label>GEM</label>
    </interactant>
    <organismsDiffer>false</organismsDiffer>
    <experiments>3</experiments>
</comment>
<comment type="interaction">
    <interactant intactId="EBI-10258659">
        <id>Q86U28</id>
    </interactant>
    <interactant intactId="EBI-747754">
        <id>P28799</id>
        <label>GRN</label>
    </interactant>
    <organismsDiffer>false</organismsDiffer>
    <experiments>3</experiments>
</comment>
<comment type="interaction">
    <interactant intactId="EBI-10258659">
        <id>Q86U28</id>
    </interactant>
    <interactant intactId="EBI-351506">
        <id>P06396</id>
        <label>GSN</label>
    </interactant>
    <organismsDiffer>false</organismsDiffer>
    <experiments>3</experiments>
</comment>
<comment type="interaction">
    <interactant intactId="EBI-10258659">
        <id>Q86U28</id>
    </interactant>
    <interactant intactId="EBI-11978177">
        <id>Q96NT3-2</id>
        <label>GUCD1</label>
    </interactant>
    <organismsDiffer>false</organismsDiffer>
    <experiments>3</experiments>
</comment>
<comment type="interaction">
    <interactant intactId="EBI-10258659">
        <id>Q86U28</id>
    </interactant>
    <interactant intactId="EBI-10714899">
        <id>Q5T440</id>
        <label>IBA57</label>
    </interactant>
    <organismsDiffer>false</organismsDiffer>
    <experiments>6</experiments>
</comment>
<comment type="interaction">
    <interactant intactId="EBI-10258659">
        <id>Q86U28</id>
    </interactant>
    <interactant intactId="EBI-2866528">
        <id>Q9BUE6</id>
        <label>ISCA1</label>
    </interactant>
    <organismsDiffer>false</organismsDiffer>
    <experiments>6</experiments>
</comment>
<comment type="interaction">
    <interactant intactId="EBI-10258659">
        <id>Q86U28</id>
    </interactant>
    <interactant intactId="EBI-10258659">
        <id>Q86U28</id>
        <label>ISCA2</label>
    </interactant>
    <organismsDiffer>false</organismsDiffer>
    <experiments>2</experiments>
</comment>
<comment type="interaction">
    <interactant intactId="EBI-10258659">
        <id>Q86U28</id>
    </interactant>
    <interactant intactId="EBI-10975473">
        <id>O60333-2</id>
        <label>KIF1B</label>
    </interactant>
    <organismsDiffer>false</organismsDiffer>
    <experiments>3</experiments>
</comment>
<comment type="interaction">
    <interactant intactId="EBI-10258659">
        <id>Q86U28</id>
    </interactant>
    <interactant intactId="EBI-741158">
        <id>Q96HA8</id>
        <label>NTAQ1</label>
    </interactant>
    <organismsDiffer>false</organismsDiffer>
    <experiments>3</experiments>
</comment>
<comment type="interaction">
    <interactant intactId="EBI-10258659">
        <id>Q86U28</id>
    </interactant>
    <interactant intactId="EBI-50433196">
        <id>A0A6Q8PF08</id>
        <label>PMP22</label>
    </interactant>
    <organismsDiffer>false</organismsDiffer>
    <experiments>3</experiments>
</comment>
<comment type="interaction">
    <interactant intactId="EBI-10258659">
        <id>Q86U28</id>
    </interactant>
    <interactant intactId="EBI-2130266">
        <id>Q9H4P4</id>
        <label>RNF41</label>
    </interactant>
    <organismsDiffer>false</organismsDiffer>
    <experiments>7</experiments>
</comment>
<comment type="interaction">
    <interactant intactId="EBI-10258659">
        <id>Q86U28</id>
    </interactant>
    <interactant intactId="EBI-5235340">
        <id>Q7Z699</id>
        <label>SPRED1</label>
    </interactant>
    <organismsDiffer>false</organismsDiffer>
    <experiments>3</experiments>
</comment>
<comment type="interaction">
    <interactant intactId="EBI-10258659">
        <id>Q86U28</id>
    </interactant>
    <interactant intactId="EBI-3921347">
        <id>P51687</id>
        <label>SUOX</label>
    </interactant>
    <organismsDiffer>false</organismsDiffer>
    <experiments>3</experiments>
</comment>
<comment type="interaction">
    <interactant intactId="EBI-10258659">
        <id>Q86U28</id>
    </interactant>
    <interactant intactId="EBI-711909">
        <id>P02766</id>
        <label>TTR</label>
    </interactant>
    <organismsDiffer>false</organismsDiffer>
    <experiments>3</experiments>
</comment>
<comment type="interaction">
    <interactant intactId="EBI-10258659">
        <id>Q86U28</id>
    </interactant>
    <interactant intactId="EBI-720609">
        <id>O76024</id>
        <label>WFS1</label>
    </interactant>
    <organismsDiffer>false</organismsDiffer>
    <experiments>3</experiments>
</comment>
<comment type="subcellular location">
    <subcellularLocation>
        <location evidence="4">Mitochondrion</location>
    </subcellularLocation>
</comment>
<comment type="alternative products">
    <event type="alternative splicing"/>
    <isoform>
        <id>Q86U28-1</id>
        <name>1</name>
        <sequence type="displayed"/>
    </isoform>
    <isoform>
        <id>Q86U28-2</id>
        <name>2</name>
        <sequence type="described" ref="VSP_055691 VSP_055692"/>
    </isoform>
</comment>
<comment type="disease" evidence="5">
    <disease id="DI-04429">
        <name>Multiple mitochondrial dysfunctions syndrome 4</name>
        <acronym>MMDS4</acronym>
        <description>A severe disorder of systemic energy metabolism, resulting in weakness, respiratory failure, lack of neurologic development, lactic acidosis, hyperglycinemia and early death.</description>
        <dbReference type="MIM" id="616370"/>
    </disease>
    <text>The disease is caused by variants affecting the gene represented in this entry.</text>
</comment>
<comment type="similarity">
    <text evidence="8">Belongs to the HesB/IscA family.</text>
</comment>
<comment type="sequence caution" evidence="8">
    <conflict type="erroneous initiation">
        <sequence resource="EMBL-CDS" id="CAD62580"/>
    </conflict>
    <text>Extended N-terminus.</text>
</comment>
<protein>
    <recommendedName>
        <fullName>Iron-sulfur cluster assembly 2 homolog, mitochondrial</fullName>
    </recommendedName>
    <alternativeName>
        <fullName>HESB-like domain-containing protein 1</fullName>
    </alternativeName>
</protein>
<dbReference type="EMBL" id="BX248252">
    <property type="protein sequence ID" value="CAD62580.1"/>
    <property type="status" value="ALT_INIT"/>
    <property type="molecule type" value="mRNA"/>
</dbReference>
<dbReference type="EMBL" id="AK290728">
    <property type="protein sequence ID" value="BAF83417.1"/>
    <property type="molecule type" value="mRNA"/>
</dbReference>
<dbReference type="EMBL" id="AC005479">
    <property type="status" value="NOT_ANNOTATED_CDS"/>
    <property type="molecule type" value="Genomic_DNA"/>
</dbReference>
<dbReference type="EMBL" id="CH471061">
    <property type="protein sequence ID" value="EAW81180.1"/>
    <property type="molecule type" value="Genomic_DNA"/>
</dbReference>
<dbReference type="EMBL" id="BC015771">
    <property type="protein sequence ID" value="AAH15771.2"/>
    <property type="molecule type" value="mRNA"/>
</dbReference>
<dbReference type="EMBL" id="BC032893">
    <property type="protein sequence ID" value="AAH32893.1"/>
    <property type="molecule type" value="mRNA"/>
</dbReference>
<dbReference type="CCDS" id="CCDS32122.1">
    <molecule id="Q86U28-1"/>
</dbReference>
<dbReference type="CCDS" id="CCDS61504.1">
    <molecule id="Q86U28-2"/>
</dbReference>
<dbReference type="RefSeq" id="NP_001258936.1">
    <molecule id="Q86U28-2"/>
    <property type="nucleotide sequence ID" value="NM_001272007.2"/>
</dbReference>
<dbReference type="RefSeq" id="NP_919255.2">
    <molecule id="Q86U28-1"/>
    <property type="nucleotide sequence ID" value="NM_194279.4"/>
</dbReference>
<dbReference type="SASBDB" id="Q86U28"/>
<dbReference type="SMR" id="Q86U28"/>
<dbReference type="BioGRID" id="125808">
    <property type="interactions" value="91"/>
</dbReference>
<dbReference type="ComplexPortal" id="CPX-2503">
    <property type="entry name" value="ISCA2-IBA57 mitochondrial iron-sulfur protein assembly complex"/>
</dbReference>
<dbReference type="ComplexPortal" id="CPX-2831">
    <property type="entry name" value="ISCA1-ISCA2 mitochondrial iron-sulfur protein assembly complex"/>
</dbReference>
<dbReference type="FunCoup" id="Q86U28">
    <property type="interactions" value="1402"/>
</dbReference>
<dbReference type="IntAct" id="Q86U28">
    <property type="interactions" value="63"/>
</dbReference>
<dbReference type="STRING" id="9606.ENSP00000452007"/>
<dbReference type="GlyGen" id="Q86U28">
    <property type="glycosylation" value="2 sites, 1 O-linked glycan (1 site)"/>
</dbReference>
<dbReference type="iPTMnet" id="Q86U28"/>
<dbReference type="PhosphoSitePlus" id="Q86U28"/>
<dbReference type="SwissPalm" id="Q86U28"/>
<dbReference type="BioMuta" id="ISCA2"/>
<dbReference type="DMDM" id="125950361"/>
<dbReference type="jPOST" id="Q86U28"/>
<dbReference type="MassIVE" id="Q86U28"/>
<dbReference type="PaxDb" id="9606-ENSP00000452007"/>
<dbReference type="PeptideAtlas" id="Q86U28"/>
<dbReference type="ProteomicsDB" id="32564"/>
<dbReference type="ProteomicsDB" id="69761">
    <molecule id="Q86U28-1"/>
</dbReference>
<dbReference type="Pumba" id="Q86U28"/>
<dbReference type="Antibodypedia" id="25630">
    <property type="antibodies" value="156 antibodies from 23 providers"/>
</dbReference>
<dbReference type="DNASU" id="122961"/>
<dbReference type="Ensembl" id="ENST00000554924.1">
    <molecule id="Q86U28-2"/>
    <property type="protein sequence ID" value="ENSP00000450523.1"/>
    <property type="gene ID" value="ENSG00000165898.14"/>
</dbReference>
<dbReference type="Ensembl" id="ENST00000556816.6">
    <molecule id="Q86U28-1"/>
    <property type="protein sequence ID" value="ENSP00000452007.1"/>
    <property type="gene ID" value="ENSG00000165898.14"/>
</dbReference>
<dbReference type="GeneID" id="122961"/>
<dbReference type="KEGG" id="hsa:122961"/>
<dbReference type="MANE-Select" id="ENST00000556816.6">
    <property type="protein sequence ID" value="ENSP00000452007.1"/>
    <property type="RefSeq nucleotide sequence ID" value="NM_194279.4"/>
    <property type="RefSeq protein sequence ID" value="NP_919255.2"/>
</dbReference>
<dbReference type="UCSC" id="uc001xpz.4">
    <molecule id="Q86U28-1"/>
    <property type="organism name" value="human"/>
</dbReference>
<dbReference type="AGR" id="HGNC:19857"/>
<dbReference type="CTD" id="122961"/>
<dbReference type="DisGeNET" id="122961"/>
<dbReference type="GeneCards" id="ISCA2"/>
<dbReference type="GeneReviews" id="ISCA2"/>
<dbReference type="HGNC" id="HGNC:19857">
    <property type="gene designation" value="ISCA2"/>
</dbReference>
<dbReference type="HPA" id="ENSG00000165898">
    <property type="expression patterns" value="Low tissue specificity"/>
</dbReference>
<dbReference type="MalaCards" id="ISCA2"/>
<dbReference type="MIM" id="615317">
    <property type="type" value="gene"/>
</dbReference>
<dbReference type="MIM" id="616370">
    <property type="type" value="phenotype"/>
</dbReference>
<dbReference type="neXtProt" id="NX_Q86U28"/>
<dbReference type="OpenTargets" id="ENSG00000165898"/>
<dbReference type="Orphanet" id="457406">
    <property type="disease" value="Multiple mitochondrial dysfunctions syndrome type 4"/>
</dbReference>
<dbReference type="PharmGKB" id="PA162392315"/>
<dbReference type="VEuPathDB" id="HostDB:ENSG00000165898"/>
<dbReference type="eggNOG" id="KOG1119">
    <property type="taxonomic scope" value="Eukaryota"/>
</dbReference>
<dbReference type="GeneTree" id="ENSGT00390000005700"/>
<dbReference type="HOGENOM" id="CLU_069054_1_4_1"/>
<dbReference type="InParanoid" id="Q86U28"/>
<dbReference type="OMA" id="SFQIHNP"/>
<dbReference type="OrthoDB" id="1938621at2759"/>
<dbReference type="PAN-GO" id="Q86U28">
    <property type="GO annotations" value="6 GO annotations based on evolutionary models"/>
</dbReference>
<dbReference type="PhylomeDB" id="Q86U28"/>
<dbReference type="TreeFam" id="TF314519"/>
<dbReference type="PathwayCommons" id="Q86U28"/>
<dbReference type="Reactome" id="R-HSA-1362409">
    <property type="pathway name" value="Mitochondrial iron-sulfur cluster biogenesis"/>
</dbReference>
<dbReference type="Reactome" id="R-HSA-9854311">
    <property type="pathway name" value="Maturation of TCA enzymes and regulation of TCA cycle"/>
</dbReference>
<dbReference type="SignaLink" id="Q86U28"/>
<dbReference type="BioGRID-ORCS" id="122961">
    <property type="hits" value="536 hits in 1173 CRISPR screens"/>
</dbReference>
<dbReference type="ChiTaRS" id="ISCA2">
    <property type="organism name" value="human"/>
</dbReference>
<dbReference type="GenomeRNAi" id="122961"/>
<dbReference type="Pharos" id="Q86U28">
    <property type="development level" value="Tbio"/>
</dbReference>
<dbReference type="PRO" id="PR:Q86U28"/>
<dbReference type="Proteomes" id="UP000005640">
    <property type="component" value="Chromosome 14"/>
</dbReference>
<dbReference type="RNAct" id="Q86U28">
    <property type="molecule type" value="protein"/>
</dbReference>
<dbReference type="Bgee" id="ENSG00000165898">
    <property type="expression patterns" value="Expressed in left ventricle myocardium and 186 other cell types or tissues"/>
</dbReference>
<dbReference type="ExpressionAtlas" id="Q86U28">
    <property type="expression patterns" value="baseline and differential"/>
</dbReference>
<dbReference type="GO" id="GO:0120510">
    <property type="term" value="C:mitochondrial [4Fe-4S] assembly complex"/>
    <property type="evidence" value="ECO:0000314"/>
    <property type="project" value="FlyBase"/>
</dbReference>
<dbReference type="GO" id="GO:0005759">
    <property type="term" value="C:mitochondrial matrix"/>
    <property type="evidence" value="ECO:0000304"/>
    <property type="project" value="Reactome"/>
</dbReference>
<dbReference type="GO" id="GO:0005739">
    <property type="term" value="C:mitochondrion"/>
    <property type="evidence" value="ECO:0006056"/>
    <property type="project" value="FlyBase"/>
</dbReference>
<dbReference type="GO" id="GO:0051537">
    <property type="term" value="F:2 iron, 2 sulfur cluster binding"/>
    <property type="evidence" value="ECO:0000318"/>
    <property type="project" value="GO_Central"/>
</dbReference>
<dbReference type="GO" id="GO:0051539">
    <property type="term" value="F:4 iron, 4 sulfur cluster binding"/>
    <property type="evidence" value="ECO:0000318"/>
    <property type="project" value="GO_Central"/>
</dbReference>
<dbReference type="GO" id="GO:0042802">
    <property type="term" value="F:identical protein binding"/>
    <property type="evidence" value="ECO:0000353"/>
    <property type="project" value="IntAct"/>
</dbReference>
<dbReference type="GO" id="GO:0005506">
    <property type="term" value="F:iron ion binding"/>
    <property type="evidence" value="ECO:0000318"/>
    <property type="project" value="GO_Central"/>
</dbReference>
<dbReference type="GO" id="GO:0016226">
    <property type="term" value="P:iron-sulfur cluster assembly"/>
    <property type="evidence" value="ECO:0000318"/>
    <property type="project" value="GO_Central"/>
</dbReference>
<dbReference type="FunFam" id="2.60.300.12:FF:000006">
    <property type="entry name" value="Iron-sulfur cluster assembly 2 mitochondrial"/>
    <property type="match status" value="1"/>
</dbReference>
<dbReference type="Gene3D" id="2.60.300.12">
    <property type="entry name" value="HesB-like domain"/>
    <property type="match status" value="1"/>
</dbReference>
<dbReference type="InterPro" id="IPR000361">
    <property type="entry name" value="FeS_biogenesis"/>
</dbReference>
<dbReference type="InterPro" id="IPR016092">
    <property type="entry name" value="FeS_cluster_insertion"/>
</dbReference>
<dbReference type="InterPro" id="IPR017870">
    <property type="entry name" value="FeS_cluster_insertion_CS"/>
</dbReference>
<dbReference type="InterPro" id="IPR035903">
    <property type="entry name" value="HesB-like_dom_sf"/>
</dbReference>
<dbReference type="NCBIfam" id="TIGR00049">
    <property type="entry name" value="iron-sulfur cluster assembly accessory protein"/>
    <property type="match status" value="1"/>
</dbReference>
<dbReference type="PANTHER" id="PTHR43011">
    <property type="entry name" value="IRON-SULFUR CLUSTER ASSEMBLY 2 HOMOLOG, MITOCHONDRIAL"/>
    <property type="match status" value="1"/>
</dbReference>
<dbReference type="PANTHER" id="PTHR43011:SF1">
    <property type="entry name" value="IRON-SULFUR CLUSTER ASSEMBLY 2 HOMOLOG, MITOCHONDRIAL"/>
    <property type="match status" value="1"/>
</dbReference>
<dbReference type="Pfam" id="PF01521">
    <property type="entry name" value="Fe-S_biosyn"/>
    <property type="match status" value="1"/>
</dbReference>
<dbReference type="SUPFAM" id="SSF89360">
    <property type="entry name" value="HesB-like domain"/>
    <property type="match status" value="1"/>
</dbReference>
<dbReference type="PROSITE" id="PS01152">
    <property type="entry name" value="HESB"/>
    <property type="match status" value="1"/>
</dbReference>
<proteinExistence type="evidence at protein level"/>
<evidence type="ECO:0000250" key="1">
    <source>
        <dbReference type="UniProtKB" id="P0AAC8"/>
    </source>
</evidence>
<evidence type="ECO:0000255" key="2"/>
<evidence type="ECO:0000256" key="3">
    <source>
        <dbReference type="SAM" id="MobiDB-lite"/>
    </source>
</evidence>
<evidence type="ECO:0000269" key="4">
    <source>
    </source>
</evidence>
<evidence type="ECO:0000269" key="5">
    <source>
    </source>
</evidence>
<evidence type="ECO:0000269" key="6">
    <source>
    </source>
</evidence>
<evidence type="ECO:0000269" key="7">
    <source>
    </source>
</evidence>
<evidence type="ECO:0000305" key="8"/>
<sequence>MAAAWGSSLTAATQRAVTPWPRGRLLTASLGPQARREASSSSPEAGEGQIRLTDSCVQRLLEITEGSEFLRLQVEGGGCSGFQYKFSLDTVINPDDRVFEQGGARVVVDSDSLAFVKGAQVDFSQELIRSSFQVLNNPQAQQGCSCGSSFSIKL</sequence>
<accession>Q86U28</accession>
<accession>A6NFF1</accession>
<accession>A8K3W3</accession>
<accession>G3V291</accession>
<accession>Q8IYZ0</accession>
<accession>Q96BB2</accession>
<organism>
    <name type="scientific">Homo sapiens</name>
    <name type="common">Human</name>
    <dbReference type="NCBI Taxonomy" id="9606"/>
    <lineage>
        <taxon>Eukaryota</taxon>
        <taxon>Metazoa</taxon>
        <taxon>Chordata</taxon>
        <taxon>Craniata</taxon>
        <taxon>Vertebrata</taxon>
        <taxon>Euteleostomi</taxon>
        <taxon>Mammalia</taxon>
        <taxon>Eutheria</taxon>
        <taxon>Euarchontoglires</taxon>
        <taxon>Primates</taxon>
        <taxon>Haplorrhini</taxon>
        <taxon>Catarrhini</taxon>
        <taxon>Hominidae</taxon>
        <taxon>Homo</taxon>
    </lineage>
</organism>
<name>ISCA2_HUMAN</name>
<keyword id="KW-0025">Alternative splicing</keyword>
<keyword id="KW-0225">Disease variant</keyword>
<keyword id="KW-0408">Iron</keyword>
<keyword id="KW-0411">Iron-sulfur</keyword>
<keyword id="KW-0479">Metal-binding</keyword>
<keyword id="KW-0496">Mitochondrion</keyword>
<keyword id="KW-1274">Primary mitochondrial disease</keyword>
<keyword id="KW-1267">Proteomics identification</keyword>
<keyword id="KW-1185">Reference proteome</keyword>
<keyword id="KW-0809">Transit peptide</keyword>